<name>UPP_PARP8</name>
<feature type="chain" id="PRO_1000139105" description="Uracil phosphoribosyltransferase">
    <location>
        <begin position="1"/>
        <end position="216"/>
    </location>
</feature>
<feature type="binding site" evidence="1">
    <location>
        <position position="85"/>
    </location>
    <ligand>
        <name>5-phospho-alpha-D-ribose 1-diphosphate</name>
        <dbReference type="ChEBI" id="CHEBI:58017"/>
    </ligand>
</feature>
<feature type="binding site" evidence="1">
    <location>
        <position position="110"/>
    </location>
    <ligand>
        <name>5-phospho-alpha-D-ribose 1-diphosphate</name>
        <dbReference type="ChEBI" id="CHEBI:58017"/>
    </ligand>
</feature>
<feature type="binding site" evidence="1">
    <location>
        <begin position="135"/>
        <end position="143"/>
    </location>
    <ligand>
        <name>5-phospho-alpha-D-ribose 1-diphosphate</name>
        <dbReference type="ChEBI" id="CHEBI:58017"/>
    </ligand>
</feature>
<feature type="binding site" evidence="1">
    <location>
        <position position="200"/>
    </location>
    <ligand>
        <name>uracil</name>
        <dbReference type="ChEBI" id="CHEBI:17568"/>
    </ligand>
</feature>
<feature type="binding site" evidence="1">
    <location>
        <begin position="205"/>
        <end position="207"/>
    </location>
    <ligand>
        <name>uracil</name>
        <dbReference type="ChEBI" id="CHEBI:17568"/>
    </ligand>
</feature>
<feature type="binding site" evidence="1">
    <location>
        <position position="206"/>
    </location>
    <ligand>
        <name>5-phospho-alpha-D-ribose 1-diphosphate</name>
        <dbReference type="ChEBI" id="CHEBI:58017"/>
    </ligand>
</feature>
<accession>B2JE33</accession>
<keyword id="KW-0021">Allosteric enzyme</keyword>
<keyword id="KW-0328">Glycosyltransferase</keyword>
<keyword id="KW-0342">GTP-binding</keyword>
<keyword id="KW-0460">Magnesium</keyword>
<keyword id="KW-0547">Nucleotide-binding</keyword>
<keyword id="KW-1185">Reference proteome</keyword>
<keyword id="KW-0808">Transferase</keyword>
<dbReference type="EC" id="2.4.2.9" evidence="1"/>
<dbReference type="EMBL" id="CP001043">
    <property type="protein sequence ID" value="ACC71241.1"/>
    <property type="molecule type" value="Genomic_DNA"/>
</dbReference>
<dbReference type="RefSeq" id="WP_012401447.1">
    <property type="nucleotide sequence ID" value="NC_010622.1"/>
</dbReference>
<dbReference type="SMR" id="B2JE33"/>
<dbReference type="STRING" id="391038.Bphy_2063"/>
<dbReference type="KEGG" id="bph:Bphy_2063"/>
<dbReference type="eggNOG" id="COG0035">
    <property type="taxonomic scope" value="Bacteria"/>
</dbReference>
<dbReference type="HOGENOM" id="CLU_067096_2_2_4"/>
<dbReference type="OrthoDB" id="9781675at2"/>
<dbReference type="UniPathway" id="UPA00574">
    <property type="reaction ID" value="UER00636"/>
</dbReference>
<dbReference type="Proteomes" id="UP000001192">
    <property type="component" value="Chromosome 1"/>
</dbReference>
<dbReference type="GO" id="GO:0005525">
    <property type="term" value="F:GTP binding"/>
    <property type="evidence" value="ECO:0007669"/>
    <property type="project" value="UniProtKB-KW"/>
</dbReference>
<dbReference type="GO" id="GO:0000287">
    <property type="term" value="F:magnesium ion binding"/>
    <property type="evidence" value="ECO:0007669"/>
    <property type="project" value="UniProtKB-UniRule"/>
</dbReference>
<dbReference type="GO" id="GO:0004845">
    <property type="term" value="F:uracil phosphoribosyltransferase activity"/>
    <property type="evidence" value="ECO:0007669"/>
    <property type="project" value="UniProtKB-UniRule"/>
</dbReference>
<dbReference type="GO" id="GO:0044206">
    <property type="term" value="P:UMP salvage"/>
    <property type="evidence" value="ECO:0007669"/>
    <property type="project" value="UniProtKB-UniRule"/>
</dbReference>
<dbReference type="GO" id="GO:0006223">
    <property type="term" value="P:uracil salvage"/>
    <property type="evidence" value="ECO:0007669"/>
    <property type="project" value="InterPro"/>
</dbReference>
<dbReference type="CDD" id="cd06223">
    <property type="entry name" value="PRTases_typeI"/>
    <property type="match status" value="1"/>
</dbReference>
<dbReference type="FunFam" id="3.40.50.2020:FF:000003">
    <property type="entry name" value="Uracil phosphoribosyltransferase"/>
    <property type="match status" value="1"/>
</dbReference>
<dbReference type="Gene3D" id="3.40.50.2020">
    <property type="match status" value="1"/>
</dbReference>
<dbReference type="HAMAP" id="MF_01218_B">
    <property type="entry name" value="Upp_B"/>
    <property type="match status" value="1"/>
</dbReference>
<dbReference type="InterPro" id="IPR000836">
    <property type="entry name" value="PRibTrfase_dom"/>
</dbReference>
<dbReference type="InterPro" id="IPR029057">
    <property type="entry name" value="PRTase-like"/>
</dbReference>
<dbReference type="InterPro" id="IPR034332">
    <property type="entry name" value="Upp_B"/>
</dbReference>
<dbReference type="InterPro" id="IPR050054">
    <property type="entry name" value="UPRTase/APRTase"/>
</dbReference>
<dbReference type="InterPro" id="IPR005765">
    <property type="entry name" value="Ura_phspho_trans"/>
</dbReference>
<dbReference type="NCBIfam" id="NF001097">
    <property type="entry name" value="PRK00129.1"/>
    <property type="match status" value="1"/>
</dbReference>
<dbReference type="NCBIfam" id="TIGR01091">
    <property type="entry name" value="upp"/>
    <property type="match status" value="1"/>
</dbReference>
<dbReference type="PANTHER" id="PTHR32315">
    <property type="entry name" value="ADENINE PHOSPHORIBOSYLTRANSFERASE"/>
    <property type="match status" value="1"/>
</dbReference>
<dbReference type="PANTHER" id="PTHR32315:SF4">
    <property type="entry name" value="URACIL PHOSPHORIBOSYLTRANSFERASE, CHLOROPLASTIC"/>
    <property type="match status" value="1"/>
</dbReference>
<dbReference type="Pfam" id="PF14681">
    <property type="entry name" value="UPRTase"/>
    <property type="match status" value="1"/>
</dbReference>
<dbReference type="SUPFAM" id="SSF53271">
    <property type="entry name" value="PRTase-like"/>
    <property type="match status" value="1"/>
</dbReference>
<sequence>MTQDSRFPNLFILDHPLIQHKLSHMRDRDTSTRTFRELLREITLLMGYEITRNLPMTTRRVSTPLVDIDAPVIAGKKLAIVPVLRAGVGMSDGLLELIPSARVGHIGVYRDDDHRPVEYLVRLPDLEDRIFILCDPMVATGYSAVHAIDVLKRRGVAGENISFLALVAAPEGVQVFQDAHPDVKLYVASLDSHLNEHAYIIPGLGDAGDRLFGTKN</sequence>
<gene>
    <name evidence="1" type="primary">upp</name>
    <name type="ordered locus">Bphy_2063</name>
</gene>
<proteinExistence type="inferred from homology"/>
<organism>
    <name type="scientific">Paraburkholderia phymatum (strain DSM 17167 / CIP 108236 / LMG 21445 / STM815)</name>
    <name type="common">Burkholderia phymatum</name>
    <dbReference type="NCBI Taxonomy" id="391038"/>
    <lineage>
        <taxon>Bacteria</taxon>
        <taxon>Pseudomonadati</taxon>
        <taxon>Pseudomonadota</taxon>
        <taxon>Betaproteobacteria</taxon>
        <taxon>Burkholderiales</taxon>
        <taxon>Burkholderiaceae</taxon>
        <taxon>Paraburkholderia</taxon>
    </lineage>
</organism>
<comment type="function">
    <text evidence="1">Catalyzes the conversion of uracil and 5-phospho-alpha-D-ribose 1-diphosphate (PRPP) to UMP and diphosphate.</text>
</comment>
<comment type="catalytic activity">
    <reaction evidence="1">
        <text>UMP + diphosphate = 5-phospho-alpha-D-ribose 1-diphosphate + uracil</text>
        <dbReference type="Rhea" id="RHEA:13017"/>
        <dbReference type="ChEBI" id="CHEBI:17568"/>
        <dbReference type="ChEBI" id="CHEBI:33019"/>
        <dbReference type="ChEBI" id="CHEBI:57865"/>
        <dbReference type="ChEBI" id="CHEBI:58017"/>
        <dbReference type="EC" id="2.4.2.9"/>
    </reaction>
</comment>
<comment type="cofactor">
    <cofactor evidence="1">
        <name>Mg(2+)</name>
        <dbReference type="ChEBI" id="CHEBI:18420"/>
    </cofactor>
    <text evidence="1">Binds 1 Mg(2+) ion per subunit. The magnesium is bound as Mg-PRPP.</text>
</comment>
<comment type="activity regulation">
    <text evidence="1">Allosterically activated by GTP.</text>
</comment>
<comment type="pathway">
    <text evidence="1">Pyrimidine metabolism; UMP biosynthesis via salvage pathway; UMP from uracil: step 1/1.</text>
</comment>
<comment type="similarity">
    <text evidence="1">Belongs to the UPRTase family.</text>
</comment>
<protein>
    <recommendedName>
        <fullName evidence="1">Uracil phosphoribosyltransferase</fullName>
        <ecNumber evidence="1">2.4.2.9</ecNumber>
    </recommendedName>
    <alternativeName>
        <fullName evidence="1">UMP pyrophosphorylase</fullName>
    </alternativeName>
    <alternativeName>
        <fullName evidence="1">UPRTase</fullName>
    </alternativeName>
</protein>
<reference key="1">
    <citation type="journal article" date="2014" name="Stand. Genomic Sci.">
        <title>Complete genome sequence of Burkholderia phymatum STM815(T), a broad host range and efficient nitrogen-fixing symbiont of Mimosa species.</title>
        <authorList>
            <person name="Moulin L."/>
            <person name="Klonowska A."/>
            <person name="Caroline B."/>
            <person name="Booth K."/>
            <person name="Vriezen J.A."/>
            <person name="Melkonian R."/>
            <person name="James E.K."/>
            <person name="Young J.P."/>
            <person name="Bena G."/>
            <person name="Hauser L."/>
            <person name="Land M."/>
            <person name="Kyrpides N."/>
            <person name="Bruce D."/>
            <person name="Chain P."/>
            <person name="Copeland A."/>
            <person name="Pitluck S."/>
            <person name="Woyke T."/>
            <person name="Lizotte-Waniewski M."/>
            <person name="Bristow J."/>
            <person name="Riley M."/>
        </authorList>
    </citation>
    <scope>NUCLEOTIDE SEQUENCE [LARGE SCALE GENOMIC DNA]</scope>
    <source>
        <strain>DSM 17167 / CIP 108236 / LMG 21445 / STM815</strain>
    </source>
</reference>
<evidence type="ECO:0000255" key="1">
    <source>
        <dbReference type="HAMAP-Rule" id="MF_01218"/>
    </source>
</evidence>